<proteinExistence type="inferred from homology"/>
<accession>B3E0U2</accession>
<organism>
    <name type="scientific">Methylacidiphilum infernorum (isolate V4)</name>
    <name type="common">Methylokorus infernorum (strain V4)</name>
    <dbReference type="NCBI Taxonomy" id="481448"/>
    <lineage>
        <taxon>Bacteria</taxon>
        <taxon>Pseudomonadati</taxon>
        <taxon>Verrucomicrobiota</taxon>
        <taxon>Methylacidiphilae</taxon>
        <taxon>Methylacidiphilales</taxon>
        <taxon>Methylacidiphilaceae</taxon>
        <taxon>Methylacidiphilum (ex Ratnadevi et al. 2023)</taxon>
    </lineage>
</organism>
<keyword id="KW-0687">Ribonucleoprotein</keyword>
<keyword id="KW-0689">Ribosomal protein</keyword>
<reference key="1">
    <citation type="journal article" date="2008" name="Biol. Direct">
        <title>Complete genome sequence of the extremely acidophilic methanotroph isolate V4, Methylacidiphilum infernorum, a representative of the bacterial phylum Verrucomicrobia.</title>
        <authorList>
            <person name="Hou S."/>
            <person name="Makarova K.S."/>
            <person name="Saw J.H."/>
            <person name="Senin P."/>
            <person name="Ly B.V."/>
            <person name="Zhou Z."/>
            <person name="Ren Y."/>
            <person name="Wang J."/>
            <person name="Galperin M.Y."/>
            <person name="Omelchenko M.V."/>
            <person name="Wolf Y.I."/>
            <person name="Yutin N."/>
            <person name="Koonin E.V."/>
            <person name="Stott M.B."/>
            <person name="Mountain B.W."/>
            <person name="Crowe M.A."/>
            <person name="Smirnova A.V."/>
            <person name="Dunfield P.F."/>
            <person name="Feng L."/>
            <person name="Wang L."/>
            <person name="Alam M."/>
        </authorList>
    </citation>
    <scope>NUCLEOTIDE SEQUENCE [LARGE SCALE GENOMIC DNA]</scope>
    <source>
        <strain>Isolate V4</strain>
    </source>
</reference>
<protein>
    <recommendedName>
        <fullName evidence="1">Large ribosomal subunit protein uL13</fullName>
    </recommendedName>
    <alternativeName>
        <fullName evidence="2">50S ribosomal protein L13</fullName>
    </alternativeName>
</protein>
<gene>
    <name evidence="1" type="primary">rplM</name>
    <name type="ordered locus">Minf_2365</name>
</gene>
<feature type="chain" id="PRO_1000144149" description="Large ribosomal subunit protein uL13">
    <location>
        <begin position="1"/>
        <end position="143"/>
    </location>
</feature>
<evidence type="ECO:0000255" key="1">
    <source>
        <dbReference type="HAMAP-Rule" id="MF_01366"/>
    </source>
</evidence>
<evidence type="ECO:0000305" key="2"/>
<name>RL13_METI4</name>
<comment type="function">
    <text evidence="1">This protein is one of the early assembly proteins of the 50S ribosomal subunit, although it is not seen to bind rRNA by itself. It is important during the early stages of 50S assembly.</text>
</comment>
<comment type="subunit">
    <text evidence="1">Part of the 50S ribosomal subunit.</text>
</comment>
<comment type="similarity">
    <text evidence="1">Belongs to the universal ribosomal protein uL13 family.</text>
</comment>
<dbReference type="EMBL" id="CP000975">
    <property type="protein sequence ID" value="ACD84419.1"/>
    <property type="molecule type" value="Genomic_DNA"/>
</dbReference>
<dbReference type="RefSeq" id="WP_012464699.1">
    <property type="nucleotide sequence ID" value="NC_010794.1"/>
</dbReference>
<dbReference type="SMR" id="B3E0U2"/>
<dbReference type="STRING" id="481448.Minf_2365"/>
<dbReference type="KEGG" id="min:Minf_2365"/>
<dbReference type="eggNOG" id="COG0102">
    <property type="taxonomic scope" value="Bacteria"/>
</dbReference>
<dbReference type="HOGENOM" id="CLU_082184_2_2_0"/>
<dbReference type="OrthoDB" id="9801330at2"/>
<dbReference type="Proteomes" id="UP000009149">
    <property type="component" value="Chromosome"/>
</dbReference>
<dbReference type="GO" id="GO:0022625">
    <property type="term" value="C:cytosolic large ribosomal subunit"/>
    <property type="evidence" value="ECO:0007669"/>
    <property type="project" value="TreeGrafter"/>
</dbReference>
<dbReference type="GO" id="GO:0003729">
    <property type="term" value="F:mRNA binding"/>
    <property type="evidence" value="ECO:0007669"/>
    <property type="project" value="TreeGrafter"/>
</dbReference>
<dbReference type="GO" id="GO:0003735">
    <property type="term" value="F:structural constituent of ribosome"/>
    <property type="evidence" value="ECO:0007669"/>
    <property type="project" value="InterPro"/>
</dbReference>
<dbReference type="GO" id="GO:0017148">
    <property type="term" value="P:negative regulation of translation"/>
    <property type="evidence" value="ECO:0007669"/>
    <property type="project" value="TreeGrafter"/>
</dbReference>
<dbReference type="GO" id="GO:0006412">
    <property type="term" value="P:translation"/>
    <property type="evidence" value="ECO:0007669"/>
    <property type="project" value="UniProtKB-UniRule"/>
</dbReference>
<dbReference type="CDD" id="cd00392">
    <property type="entry name" value="Ribosomal_L13"/>
    <property type="match status" value="1"/>
</dbReference>
<dbReference type="Gene3D" id="3.90.1180.10">
    <property type="entry name" value="Ribosomal protein L13"/>
    <property type="match status" value="1"/>
</dbReference>
<dbReference type="HAMAP" id="MF_01366">
    <property type="entry name" value="Ribosomal_uL13"/>
    <property type="match status" value="1"/>
</dbReference>
<dbReference type="InterPro" id="IPR005822">
    <property type="entry name" value="Ribosomal_uL13"/>
</dbReference>
<dbReference type="InterPro" id="IPR005823">
    <property type="entry name" value="Ribosomal_uL13_bac-type"/>
</dbReference>
<dbReference type="InterPro" id="IPR023563">
    <property type="entry name" value="Ribosomal_uL13_CS"/>
</dbReference>
<dbReference type="InterPro" id="IPR036899">
    <property type="entry name" value="Ribosomal_uL13_sf"/>
</dbReference>
<dbReference type="NCBIfam" id="TIGR01066">
    <property type="entry name" value="rplM_bact"/>
    <property type="match status" value="1"/>
</dbReference>
<dbReference type="PANTHER" id="PTHR11545:SF2">
    <property type="entry name" value="LARGE RIBOSOMAL SUBUNIT PROTEIN UL13M"/>
    <property type="match status" value="1"/>
</dbReference>
<dbReference type="PANTHER" id="PTHR11545">
    <property type="entry name" value="RIBOSOMAL PROTEIN L13"/>
    <property type="match status" value="1"/>
</dbReference>
<dbReference type="Pfam" id="PF00572">
    <property type="entry name" value="Ribosomal_L13"/>
    <property type="match status" value="1"/>
</dbReference>
<dbReference type="PIRSF" id="PIRSF002181">
    <property type="entry name" value="Ribosomal_L13"/>
    <property type="match status" value="1"/>
</dbReference>
<dbReference type="SUPFAM" id="SSF52161">
    <property type="entry name" value="Ribosomal protein L13"/>
    <property type="match status" value="1"/>
</dbReference>
<dbReference type="PROSITE" id="PS00783">
    <property type="entry name" value="RIBOSOMAL_L13"/>
    <property type="match status" value="1"/>
</dbReference>
<sequence length="143" mass="16349">MKTYFQKPQEVQRKWYIIDARDKIVGKVAEKVACLLRGKHKEVFSPHVDTGDHVIVINASKAIFSGKKETQKLYSAYSGYIGGQKTFSPVQIRQKRPNFIIEHAVRGMIPHNRLGRKIYTKLHVYEGSDHPHAAQKPIPVTLD</sequence>